<protein>
    <recommendedName>
        <fullName evidence="1">Cobalt-precorrin-5B C(1)-methyltransferase</fullName>
        <ecNumber evidence="1">2.1.1.195</ecNumber>
    </recommendedName>
    <alternativeName>
        <fullName evidence="1">Cobalt-precorrin-6A synthase</fullName>
    </alternativeName>
</protein>
<proteinExistence type="inferred from homology"/>
<sequence length="350" mass="36753">MAGLQGGFTTGACAAAAAKMAAALLCGEAISERISIPLLDGTRESLPLAYAHRLPDGAEAAVYKNAGDDPDVTNGALIIARVVASDKPLEFRAGEGVGIITKPGLALPPGEPAINPGPRLMIESAVREVTDRGLRVTIAIPDGKQLAERTFNPRLGIKGGISVLGTTGRVRPFSLEAVRKTMECSYNVACASGVRHPVLVPGHIGERAAHRHFQVTQEQVVEAGNEWGFMIDLVAQTPPSALLVLGHPGKLAKLPLGHWDTHSSRSASPVPSVRELATRILECPVAESTTVEGVFADLTAEQRQCLGDTLARALQIAVSHRLDHRAPVATALINLAGDMLGSCGDLTPWQ</sequence>
<dbReference type="EC" id="2.1.1.195" evidence="1"/>
<dbReference type="EMBL" id="CP000142">
    <property type="protein sequence ID" value="ABA87735.1"/>
    <property type="molecule type" value="Genomic_DNA"/>
</dbReference>
<dbReference type="RefSeq" id="WP_011340159.1">
    <property type="nucleotide sequence ID" value="NC_007498.2"/>
</dbReference>
<dbReference type="SMR" id="Q3A7A9"/>
<dbReference type="STRING" id="338963.Pcar_0475"/>
<dbReference type="KEGG" id="pca:Pcar_0475"/>
<dbReference type="eggNOG" id="COG1903">
    <property type="taxonomic scope" value="Bacteria"/>
</dbReference>
<dbReference type="HOGENOM" id="CLU_041273_1_0_7"/>
<dbReference type="OrthoDB" id="6439987at2"/>
<dbReference type="UniPathway" id="UPA00148">
    <property type="reaction ID" value="UER00227"/>
</dbReference>
<dbReference type="Proteomes" id="UP000002534">
    <property type="component" value="Chromosome"/>
</dbReference>
<dbReference type="GO" id="GO:0043780">
    <property type="term" value="F:cobalt-precorrin-5B C1-methyltransferase activity"/>
    <property type="evidence" value="ECO:0007669"/>
    <property type="project" value="RHEA"/>
</dbReference>
<dbReference type="GO" id="GO:0019251">
    <property type="term" value="P:anaerobic cobalamin biosynthetic process"/>
    <property type="evidence" value="ECO:0007669"/>
    <property type="project" value="UniProtKB-UniRule"/>
</dbReference>
<dbReference type="GO" id="GO:0032259">
    <property type="term" value="P:methylation"/>
    <property type="evidence" value="ECO:0007669"/>
    <property type="project" value="UniProtKB-KW"/>
</dbReference>
<dbReference type="Gene3D" id="3.30.2110.10">
    <property type="entry name" value="CbiD-like"/>
    <property type="match status" value="1"/>
</dbReference>
<dbReference type="HAMAP" id="MF_00787">
    <property type="entry name" value="CbiD"/>
    <property type="match status" value="1"/>
</dbReference>
<dbReference type="InterPro" id="IPR002748">
    <property type="entry name" value="CbiD"/>
</dbReference>
<dbReference type="InterPro" id="IPR036074">
    <property type="entry name" value="CbiD_sf"/>
</dbReference>
<dbReference type="NCBIfam" id="TIGR00312">
    <property type="entry name" value="cbiD"/>
    <property type="match status" value="1"/>
</dbReference>
<dbReference type="PANTHER" id="PTHR35863">
    <property type="entry name" value="COBALT-PRECORRIN-5B C(1)-METHYLTRANSFERASE"/>
    <property type="match status" value="1"/>
</dbReference>
<dbReference type="PANTHER" id="PTHR35863:SF1">
    <property type="entry name" value="COBALT-PRECORRIN-5B C(1)-METHYLTRANSFERASE"/>
    <property type="match status" value="1"/>
</dbReference>
<dbReference type="Pfam" id="PF01888">
    <property type="entry name" value="CbiD"/>
    <property type="match status" value="1"/>
</dbReference>
<dbReference type="PIRSF" id="PIRSF026782">
    <property type="entry name" value="CbiD"/>
    <property type="match status" value="1"/>
</dbReference>
<dbReference type="SUPFAM" id="SSF111342">
    <property type="entry name" value="CbiD-like"/>
    <property type="match status" value="1"/>
</dbReference>
<gene>
    <name evidence="1" type="primary">cbiD</name>
    <name type="ordered locus">Pcar_0475</name>
</gene>
<feature type="chain" id="PRO_0000257768" description="Cobalt-precorrin-5B C(1)-methyltransferase">
    <location>
        <begin position="1"/>
        <end position="350"/>
    </location>
</feature>
<organism>
    <name type="scientific">Syntrophotalea carbinolica (strain DSM 2380 / NBRC 103641 / GraBd1)</name>
    <name type="common">Pelobacter carbinolicus</name>
    <dbReference type="NCBI Taxonomy" id="338963"/>
    <lineage>
        <taxon>Bacteria</taxon>
        <taxon>Pseudomonadati</taxon>
        <taxon>Thermodesulfobacteriota</taxon>
        <taxon>Desulfuromonadia</taxon>
        <taxon>Desulfuromonadales</taxon>
        <taxon>Syntrophotaleaceae</taxon>
        <taxon>Syntrophotalea</taxon>
    </lineage>
</organism>
<comment type="function">
    <text evidence="1">Catalyzes the methylation of C-1 in cobalt-precorrin-5B to form cobalt-precorrin-6A.</text>
</comment>
<comment type="catalytic activity">
    <reaction evidence="1">
        <text>Co-precorrin-5B + S-adenosyl-L-methionine = Co-precorrin-6A + S-adenosyl-L-homocysteine</text>
        <dbReference type="Rhea" id="RHEA:26285"/>
        <dbReference type="ChEBI" id="CHEBI:57856"/>
        <dbReference type="ChEBI" id="CHEBI:59789"/>
        <dbReference type="ChEBI" id="CHEBI:60063"/>
        <dbReference type="ChEBI" id="CHEBI:60064"/>
        <dbReference type="EC" id="2.1.1.195"/>
    </reaction>
</comment>
<comment type="pathway">
    <text evidence="1">Cofactor biosynthesis; adenosylcobalamin biosynthesis; cob(II)yrinate a,c-diamide from sirohydrochlorin (anaerobic route): step 6/10.</text>
</comment>
<comment type="similarity">
    <text evidence="1">Belongs to the CbiD family.</text>
</comment>
<keyword id="KW-0169">Cobalamin biosynthesis</keyword>
<keyword id="KW-0489">Methyltransferase</keyword>
<keyword id="KW-1185">Reference proteome</keyword>
<keyword id="KW-0949">S-adenosyl-L-methionine</keyword>
<keyword id="KW-0808">Transferase</keyword>
<reference key="1">
    <citation type="submission" date="2005-10" db="EMBL/GenBank/DDBJ databases">
        <title>Complete sequence of Pelobacter carbinolicus DSM 2380.</title>
        <authorList>
            <person name="Copeland A."/>
            <person name="Lucas S."/>
            <person name="Lapidus A."/>
            <person name="Barry K."/>
            <person name="Detter J.C."/>
            <person name="Glavina T."/>
            <person name="Hammon N."/>
            <person name="Israni S."/>
            <person name="Pitluck S."/>
            <person name="Chertkov O."/>
            <person name="Schmutz J."/>
            <person name="Larimer F."/>
            <person name="Land M."/>
            <person name="Kyrpides N."/>
            <person name="Ivanova N."/>
            <person name="Richardson P."/>
        </authorList>
    </citation>
    <scope>NUCLEOTIDE SEQUENCE [LARGE SCALE GENOMIC DNA]</scope>
    <source>
        <strain>DSM 2380 / NBRC 103641 / GraBd1</strain>
    </source>
</reference>
<evidence type="ECO:0000255" key="1">
    <source>
        <dbReference type="HAMAP-Rule" id="MF_00787"/>
    </source>
</evidence>
<name>CBID_SYNC1</name>
<accession>Q3A7A9</accession>